<organism>
    <name type="scientific">Penicillium crustosum</name>
    <name type="common">Blue mold fungus</name>
    <dbReference type="NCBI Taxonomy" id="36656"/>
    <lineage>
        <taxon>Eukaryota</taxon>
        <taxon>Fungi</taxon>
        <taxon>Dikarya</taxon>
        <taxon>Ascomycota</taxon>
        <taxon>Pezizomycotina</taxon>
        <taxon>Eurotiomycetes</taxon>
        <taxon>Eurotiomycetidae</taxon>
        <taxon>Eurotiales</taxon>
        <taxon>Aspergillaceae</taxon>
        <taxon>Penicillium</taxon>
    </lineage>
</organism>
<feature type="chain" id="PRO_0000455059" description="ABC-type transporter claG">
    <location>
        <begin position="1"/>
        <end position="743"/>
    </location>
</feature>
<feature type="transmembrane region" description="Helical" evidence="1">
    <location>
        <begin position="124"/>
        <end position="144"/>
    </location>
</feature>
<feature type="transmembrane region" description="Helical" evidence="1">
    <location>
        <begin position="507"/>
        <end position="527"/>
    </location>
</feature>
<feature type="transmembrane region" description="Helical" evidence="1">
    <location>
        <begin position="560"/>
        <end position="580"/>
    </location>
</feature>
<feature type="transmembrane region" description="Helical" evidence="1">
    <location>
        <begin position="611"/>
        <end position="631"/>
    </location>
</feature>
<feature type="transmembrane region" description="Helical" evidence="1">
    <location>
        <begin position="636"/>
        <end position="656"/>
    </location>
</feature>
<feature type="transmembrane region" description="Helical" evidence="1">
    <location>
        <begin position="661"/>
        <end position="681"/>
    </location>
</feature>
<feature type="domain" description="ABC transporter" evidence="2">
    <location>
        <begin position="200"/>
        <end position="439"/>
    </location>
</feature>
<feature type="binding site" evidence="2">
    <location>
        <begin position="234"/>
        <end position="241"/>
    </location>
    <ligand>
        <name>ATP</name>
        <dbReference type="ChEBI" id="CHEBI:30616"/>
    </ligand>
</feature>
<feature type="glycosylation site" description="N-linked (GlcNAc...) asparagine" evidence="3">
    <location>
        <position position="4"/>
    </location>
</feature>
<feature type="glycosylation site" description="N-linked (GlcNAc...) asparagine" evidence="3">
    <location>
        <position position="30"/>
    </location>
</feature>
<feature type="glycosylation site" description="N-linked (GlcNAc...) asparagine" evidence="3">
    <location>
        <position position="159"/>
    </location>
</feature>
<dbReference type="EMBL" id="MK360918">
    <property type="protein sequence ID" value="QBK15045.1"/>
    <property type="molecule type" value="Genomic_DNA"/>
</dbReference>
<dbReference type="SMR" id="A0A481WQK1"/>
<dbReference type="GlyCosmos" id="A0A481WQK1">
    <property type="glycosylation" value="3 sites, No reported glycans"/>
</dbReference>
<dbReference type="GO" id="GO:0016020">
    <property type="term" value="C:membrane"/>
    <property type="evidence" value="ECO:0007669"/>
    <property type="project" value="UniProtKB-SubCell"/>
</dbReference>
<dbReference type="GO" id="GO:0140359">
    <property type="term" value="F:ABC-type transporter activity"/>
    <property type="evidence" value="ECO:0007669"/>
    <property type="project" value="InterPro"/>
</dbReference>
<dbReference type="GO" id="GO:0005524">
    <property type="term" value="F:ATP binding"/>
    <property type="evidence" value="ECO:0007669"/>
    <property type="project" value="UniProtKB-KW"/>
</dbReference>
<dbReference type="GO" id="GO:0016887">
    <property type="term" value="F:ATP hydrolysis activity"/>
    <property type="evidence" value="ECO:0007669"/>
    <property type="project" value="InterPro"/>
</dbReference>
<dbReference type="Gene3D" id="3.40.50.300">
    <property type="entry name" value="P-loop containing nucleotide triphosphate hydrolases"/>
    <property type="match status" value="1"/>
</dbReference>
<dbReference type="InterPro" id="IPR003593">
    <property type="entry name" value="AAA+_ATPase"/>
</dbReference>
<dbReference type="InterPro" id="IPR003439">
    <property type="entry name" value="ABC_transporter-like_ATP-bd"/>
</dbReference>
<dbReference type="InterPro" id="IPR017871">
    <property type="entry name" value="ABC_transporter-like_CS"/>
</dbReference>
<dbReference type="InterPro" id="IPR043926">
    <property type="entry name" value="ABCG_dom"/>
</dbReference>
<dbReference type="InterPro" id="IPR050352">
    <property type="entry name" value="ABCG_transporters"/>
</dbReference>
<dbReference type="InterPro" id="IPR027417">
    <property type="entry name" value="P-loop_NTPase"/>
</dbReference>
<dbReference type="PANTHER" id="PTHR48041">
    <property type="entry name" value="ABC TRANSPORTER G FAMILY MEMBER 28"/>
    <property type="match status" value="1"/>
</dbReference>
<dbReference type="PANTHER" id="PTHR48041:SF91">
    <property type="entry name" value="ABC TRANSPORTER G FAMILY MEMBER 28"/>
    <property type="match status" value="1"/>
</dbReference>
<dbReference type="Pfam" id="PF19055">
    <property type="entry name" value="ABC2_membrane_7"/>
    <property type="match status" value="2"/>
</dbReference>
<dbReference type="Pfam" id="PF00005">
    <property type="entry name" value="ABC_tran"/>
    <property type="match status" value="1"/>
</dbReference>
<dbReference type="SMART" id="SM00382">
    <property type="entry name" value="AAA"/>
    <property type="match status" value="1"/>
</dbReference>
<dbReference type="SUPFAM" id="SSF52540">
    <property type="entry name" value="P-loop containing nucleoside triphosphate hydrolases"/>
    <property type="match status" value="1"/>
</dbReference>
<dbReference type="PROSITE" id="PS00211">
    <property type="entry name" value="ABC_TRANSPORTER_1"/>
    <property type="match status" value="1"/>
</dbReference>
<dbReference type="PROSITE" id="PS50893">
    <property type="entry name" value="ABC_TRANSPORTER_2"/>
    <property type="match status" value="1"/>
</dbReference>
<accession>A0A481WQK1</accession>
<keyword id="KW-0067">ATP-binding</keyword>
<keyword id="KW-0325">Glycoprotein</keyword>
<keyword id="KW-0472">Membrane</keyword>
<keyword id="KW-0547">Nucleotide-binding</keyword>
<keyword id="KW-0812">Transmembrane</keyword>
<keyword id="KW-1133">Transmembrane helix</keyword>
<keyword id="KW-0813">Transport</keyword>
<gene>
    <name evidence="5" type="primary">claG</name>
</gene>
<proteinExistence type="inferred from homology"/>
<evidence type="ECO:0000255" key="1"/>
<evidence type="ECO:0000255" key="2">
    <source>
        <dbReference type="PROSITE-ProRule" id="PRU00434"/>
    </source>
</evidence>
<evidence type="ECO:0000255" key="3">
    <source>
        <dbReference type="PROSITE-ProRule" id="PRU00498"/>
    </source>
</evidence>
<evidence type="ECO:0000269" key="4">
    <source>
    </source>
</evidence>
<evidence type="ECO:0000303" key="5">
    <source>
    </source>
</evidence>
<evidence type="ECO:0000305" key="6"/>
<protein>
    <recommendedName>
        <fullName evidence="5">ABC-type transporter claG</fullName>
    </recommendedName>
    <alternativeName>
        <fullName evidence="5">Clavatol biosynthesis cluster protein G</fullName>
    </alternativeName>
</protein>
<name>CLAG_PENCR</name>
<comment type="function">
    <text evidence="4">ABC-type transporter; part of the cla gene cluster that produces clavatol and ortho-quinone methide (PubMed:30811183). The clavatol biosynthesis cluster cla and the terrestric acid cluster tra are both involved in the production of peniphenones and penilactones (PubMed:30811183).</text>
</comment>
<comment type="subcellular location">
    <subcellularLocation>
        <location evidence="1">Membrane</location>
        <topology evidence="1">Multi-pass membrane protein</topology>
    </subcellularLocation>
</comment>
<comment type="similarity">
    <text evidence="6">Belongs to the ABC transporter superfamily. ABCG family.</text>
</comment>
<sequence>MSSNSSCLVTNQGGALPLTATCLEGFYCPNNSLENPPEICPPTPQCRLTRLQEYHNICDHAQGTYEPIVCQPGFYCPSGGKRQIPCPKGHFCPLGTVEPFKCFGLSSCAEGSEREIPLAGLLCSILLDIFLVIVVSWPFPFAWIRQLSRGKLRRGAGGNDSESGVISAGRREISFSESKYHVSQFFTSDGSHGTAAGIEVEFSGISMRPTRSGIETLCLQNGVIRAGSFVGVMGPSGSGKSTLVKVLTGRAQPTTGSVLINGDTCRAAELRDLLALVPQDDIILPDLTVQENILYSSRVRIGSSRKDSEIEQYVDHLIISLGLNKVRNRLIGEVGKRGLSGGERKRVNIALELAAVPGIIVLDEPTSGLDAMTALSVIELLKSLTKQGVIVICVIHQPRLEIFAALDDLLLLNHGRQVYFGSAAAAKQCFQDAGYTFPLNSNPTDTMMDIMSCHDNLHLTDYPRNKPALPKQNLRIVLQSVKKIRAPWYCQVLLAFMRGTKQQTRQYPSFVLEILTGAGCGILIGLSNYEFKGHLFQGLFHLPFQLLSSPVSYRLLTEQGMLLCLTIGCAAGPAGVKTFGEEKLVFLRESCSGYSEGAYFLGKALSTLIRIFLSALHFTSFYLILTTPIVSFPNQLIVNLLYFYCIYGAASMISAITSPKNGPLITMLTSVLFCALSGCAPRLASVKSWNLAWLWYICPAVWIAEANFNQYTDPLAYLYDIKPAAEDAIRAWDRLSLHSLFIV</sequence>
<reference key="1">
    <citation type="journal article" date="2019" name="J. Am. Chem. Soc.">
        <title>Peniphenone and penilactone formation in Penicillium crustosum via 1,4-Michael additions of ortho-quinone methide from hydroxyclavatol to gamma-butyrolactones from Crustosic Acid.</title>
        <authorList>
            <person name="Fan J."/>
            <person name="Liao G."/>
            <person name="Kindinger F."/>
            <person name="Ludwig-Radtke L."/>
            <person name="Yin W.B."/>
            <person name="Li S.M."/>
        </authorList>
    </citation>
    <scope>NUCLEOTIDE SEQUENCE [GENOMIC DNA]</scope>
    <scope>FUNCTION</scope>
    <source>
        <strain>PRB-2</strain>
    </source>
</reference>